<sequence>MNPEYDYLFKLLLIGDSGVGKSCLLLRFADDTYTESYISTIGVDFKIRTIELDGKTVKLQIWDTAGQERFRTITSSYYRGAHGICVVYDVTDMDSFNNVKQWLQEIDRYATEGVNKLLVGNKSDMTDKKVVEYTVAKEFADSLGIPFLETSAKNASNVEQAFLTMARQIKERMGSSIATNNTKASVNVSPGHGVSNNSSGGCC</sequence>
<keyword id="KW-0072">Autophagy</keyword>
<keyword id="KW-0963">Cytoplasm</keyword>
<keyword id="KW-0256">Endoplasmic reticulum</keyword>
<keyword id="KW-0333">Golgi apparatus</keyword>
<keyword id="KW-0342">GTP-binding</keyword>
<keyword id="KW-0449">Lipoprotein</keyword>
<keyword id="KW-0472">Membrane</keyword>
<keyword id="KW-0547">Nucleotide-binding</keyword>
<keyword id="KW-0636">Prenylation</keyword>
<keyword id="KW-0653">Protein transport</keyword>
<keyword id="KW-1185">Reference proteome</keyword>
<keyword id="KW-0813">Transport</keyword>
<accession>P33723</accession>
<accession>Q7RVH8</accession>
<comment type="function">
    <text evidence="1">The small GTPases Rab are key regulators of intracellular membrane trafficking, from the formation of transport vesicles to their fusion with membranes. Rabs cycle between an inactive GDP-bound form and an active GTP-bound form that is able to recruit to membranes different set of downstream effectors directly responsible for vesicle formation, movement, tethering and fusion. Ypt-1 regulates the trafficking of secretory vesicles from the endoplasmic reticulum (ER) to the Golgi. Plays a role in the initial events of the autophagic vacuole development which take place at specialized regions of the endoplasmic reticulum. Also involved in the recycling of membrane proteins.</text>
</comment>
<comment type="activity regulation">
    <text evidence="4">Rab activation is generally mediated by a guanine exchange factor (GEF), while inactivation through hydrolysis of bound GTP is catalyzed by a GTPase activating protein (GAP).</text>
</comment>
<comment type="subcellular location">
    <subcellularLocation>
        <location evidence="1">Endoplasmic reticulum membrane</location>
        <topology evidence="1">Peripheral membrane protein</topology>
    </subcellularLocation>
    <subcellularLocation>
        <location evidence="1">Golgi apparatus membrane</location>
        <topology evidence="1">Peripheral membrane protein</topology>
    </subcellularLocation>
    <subcellularLocation>
        <location evidence="1">Cytoplasm</location>
    </subcellularLocation>
    <subcellularLocation>
        <location evidence="1">Preautophagosomal structure membrane</location>
        <topology evidence="4">Lipid-anchor</topology>
        <orientation evidence="4">Cytoplasmic side</orientation>
    </subcellularLocation>
</comment>
<comment type="similarity">
    <text evidence="4">Belongs to the small GTPase superfamily. Rab family.</text>
</comment>
<proteinExistence type="inferred from homology"/>
<protein>
    <recommendedName>
        <fullName>GTP-binding protein ypt1</fullName>
    </recommendedName>
</protein>
<gene>
    <name type="primary">ypt-1</name>
    <name type="ORF">B9J10.240</name>
    <name type="ORF">NCU08477</name>
</gene>
<evidence type="ECO:0000250" key="1">
    <source>
        <dbReference type="UniProtKB" id="P01123"/>
    </source>
</evidence>
<evidence type="ECO:0000250" key="2">
    <source>
        <dbReference type="UniProtKB" id="P62820"/>
    </source>
</evidence>
<evidence type="ECO:0000256" key="3">
    <source>
        <dbReference type="SAM" id="MobiDB-lite"/>
    </source>
</evidence>
<evidence type="ECO:0000305" key="4"/>
<dbReference type="EMBL" id="S51252">
    <property type="protein sequence ID" value="AAB24564.1"/>
    <property type="molecule type" value="Genomic_DNA"/>
</dbReference>
<dbReference type="EMBL" id="AL356324">
    <property type="protein sequence ID" value="CAB92031.1"/>
    <property type="molecule type" value="Genomic_DNA"/>
</dbReference>
<dbReference type="EMBL" id="CM002237">
    <property type="protein sequence ID" value="EAA33910.2"/>
    <property type="molecule type" value="Genomic_DNA"/>
</dbReference>
<dbReference type="PIR" id="S30096">
    <property type="entry name" value="S30096"/>
</dbReference>
<dbReference type="RefSeq" id="XP_963146.2">
    <property type="nucleotide sequence ID" value="XM_958053.3"/>
</dbReference>
<dbReference type="SMR" id="P33723"/>
<dbReference type="FunCoup" id="P33723">
    <property type="interactions" value="1085"/>
</dbReference>
<dbReference type="STRING" id="367110.P33723"/>
<dbReference type="PaxDb" id="5141-EFNCRP00000008456"/>
<dbReference type="EnsemblFungi" id="EAA33910">
    <property type="protein sequence ID" value="EAA33910"/>
    <property type="gene ID" value="NCU08477"/>
</dbReference>
<dbReference type="GeneID" id="3879294"/>
<dbReference type="KEGG" id="ncr:NCU08477"/>
<dbReference type="VEuPathDB" id="FungiDB:NCU08477"/>
<dbReference type="HOGENOM" id="CLU_041217_23_1_1"/>
<dbReference type="InParanoid" id="P33723"/>
<dbReference type="OMA" id="TQMAKDF"/>
<dbReference type="OrthoDB" id="9989112at2759"/>
<dbReference type="Proteomes" id="UP000001805">
    <property type="component" value="Chromosome 6, Linkage Group II"/>
</dbReference>
<dbReference type="GO" id="GO:0012505">
    <property type="term" value="C:endomembrane system"/>
    <property type="evidence" value="ECO:0000318"/>
    <property type="project" value="GO_Central"/>
</dbReference>
<dbReference type="GO" id="GO:0005789">
    <property type="term" value="C:endoplasmic reticulum membrane"/>
    <property type="evidence" value="ECO:0007669"/>
    <property type="project" value="UniProtKB-SubCell"/>
</dbReference>
<dbReference type="GO" id="GO:0000139">
    <property type="term" value="C:Golgi membrane"/>
    <property type="evidence" value="ECO:0007669"/>
    <property type="project" value="UniProtKB-SubCell"/>
</dbReference>
<dbReference type="GO" id="GO:0034045">
    <property type="term" value="C:phagophore assembly site membrane"/>
    <property type="evidence" value="ECO:0007669"/>
    <property type="project" value="UniProtKB-SubCell"/>
</dbReference>
<dbReference type="GO" id="GO:0005525">
    <property type="term" value="F:GTP binding"/>
    <property type="evidence" value="ECO:0007669"/>
    <property type="project" value="UniProtKB-KW"/>
</dbReference>
<dbReference type="GO" id="GO:0003924">
    <property type="term" value="F:GTPase activity"/>
    <property type="evidence" value="ECO:0000318"/>
    <property type="project" value="GO_Central"/>
</dbReference>
<dbReference type="GO" id="GO:0000045">
    <property type="term" value="P:autophagosome assembly"/>
    <property type="evidence" value="ECO:0000318"/>
    <property type="project" value="GO_Central"/>
</dbReference>
<dbReference type="GO" id="GO:0006886">
    <property type="term" value="P:intracellular protein transport"/>
    <property type="evidence" value="ECO:0000318"/>
    <property type="project" value="GO_Central"/>
</dbReference>
<dbReference type="CDD" id="cd01869">
    <property type="entry name" value="Rab1_Ypt1"/>
    <property type="match status" value="1"/>
</dbReference>
<dbReference type="FunFam" id="3.40.50.300:FF:000069">
    <property type="entry name" value="Ras GTP-binding protein YPT1"/>
    <property type="match status" value="1"/>
</dbReference>
<dbReference type="Gene3D" id="3.40.50.300">
    <property type="entry name" value="P-loop containing nucleotide triphosphate hydrolases"/>
    <property type="match status" value="1"/>
</dbReference>
<dbReference type="InterPro" id="IPR027417">
    <property type="entry name" value="P-loop_NTPase"/>
</dbReference>
<dbReference type="InterPro" id="IPR050227">
    <property type="entry name" value="Rab"/>
</dbReference>
<dbReference type="InterPro" id="IPR005225">
    <property type="entry name" value="Small_GTP-bd"/>
</dbReference>
<dbReference type="InterPro" id="IPR001806">
    <property type="entry name" value="Small_GTPase"/>
</dbReference>
<dbReference type="NCBIfam" id="TIGR00231">
    <property type="entry name" value="small_GTP"/>
    <property type="match status" value="1"/>
</dbReference>
<dbReference type="PANTHER" id="PTHR47977">
    <property type="entry name" value="RAS-RELATED PROTEIN RAB"/>
    <property type="match status" value="1"/>
</dbReference>
<dbReference type="Pfam" id="PF00071">
    <property type="entry name" value="Ras"/>
    <property type="match status" value="1"/>
</dbReference>
<dbReference type="PRINTS" id="PR00449">
    <property type="entry name" value="RASTRNSFRMNG"/>
</dbReference>
<dbReference type="SMART" id="SM00175">
    <property type="entry name" value="RAB"/>
    <property type="match status" value="1"/>
</dbReference>
<dbReference type="SMART" id="SM00176">
    <property type="entry name" value="RAN"/>
    <property type="match status" value="1"/>
</dbReference>
<dbReference type="SMART" id="SM00173">
    <property type="entry name" value="RAS"/>
    <property type="match status" value="1"/>
</dbReference>
<dbReference type="SMART" id="SM00174">
    <property type="entry name" value="RHO"/>
    <property type="match status" value="1"/>
</dbReference>
<dbReference type="SUPFAM" id="SSF52540">
    <property type="entry name" value="P-loop containing nucleoside triphosphate hydrolases"/>
    <property type="match status" value="1"/>
</dbReference>
<dbReference type="PROSITE" id="PS51419">
    <property type="entry name" value="RAB"/>
    <property type="match status" value="1"/>
</dbReference>
<name>YPT1_NEUCR</name>
<feature type="chain" id="PRO_0000121305" description="GTP-binding protein ypt1">
    <location>
        <begin position="1"/>
        <end position="203"/>
    </location>
</feature>
<feature type="region of interest" description="Disordered" evidence="3">
    <location>
        <begin position="180"/>
        <end position="203"/>
    </location>
</feature>
<feature type="short sequence motif" description="Effector region" evidence="4">
    <location>
        <begin position="37"/>
        <end position="45"/>
    </location>
</feature>
<feature type="binding site" evidence="2">
    <location>
        <begin position="15"/>
        <end position="23"/>
    </location>
    <ligand>
        <name>GTP</name>
        <dbReference type="ChEBI" id="CHEBI:37565"/>
    </ligand>
</feature>
<feature type="binding site" evidence="2">
    <location>
        <begin position="33"/>
        <end position="40"/>
    </location>
    <ligand>
        <name>GTP</name>
        <dbReference type="ChEBI" id="CHEBI:37565"/>
    </ligand>
</feature>
<feature type="binding site" evidence="2">
    <location>
        <begin position="63"/>
        <end position="67"/>
    </location>
    <ligand>
        <name>GTP</name>
        <dbReference type="ChEBI" id="CHEBI:37565"/>
    </ligand>
</feature>
<feature type="binding site" evidence="2">
    <location>
        <begin position="121"/>
        <end position="124"/>
    </location>
    <ligand>
        <name>GTP</name>
        <dbReference type="ChEBI" id="CHEBI:37565"/>
    </ligand>
</feature>
<feature type="binding site" evidence="2">
    <location>
        <begin position="151"/>
        <end position="153"/>
    </location>
    <ligand>
        <name>GTP</name>
        <dbReference type="ChEBI" id="CHEBI:37565"/>
    </ligand>
</feature>
<feature type="lipid moiety-binding region" description="S-geranylgeranyl cysteine" evidence="1">
    <location>
        <position position="202"/>
    </location>
</feature>
<feature type="lipid moiety-binding region" description="S-geranylgeranyl cysteine" evidence="1">
    <location>
        <position position="203"/>
    </location>
</feature>
<reference key="1">
    <citation type="journal article" date="1992" name="Mol. Gen. Genet.">
        <title>The Ncypt1 gene from Neurospora crassa is located on chromosome 2: molecular cloning and structural analysis.</title>
        <authorList>
            <person name="Heintz K."/>
            <person name="Palme K."/>
            <person name="Diefenthal T."/>
            <person name="Russo V.E.A."/>
        </authorList>
    </citation>
    <scope>NUCLEOTIDE SEQUENCE [GENOMIC DNA]</scope>
</reference>
<reference key="2">
    <citation type="journal article" date="2003" name="Nucleic Acids Res.">
        <title>What's in the genome of a filamentous fungus? Analysis of the Neurospora genome sequence.</title>
        <authorList>
            <person name="Mannhaupt G."/>
            <person name="Montrone C."/>
            <person name="Haase D."/>
            <person name="Mewes H.-W."/>
            <person name="Aign V."/>
            <person name="Hoheisel J.D."/>
            <person name="Fartmann B."/>
            <person name="Nyakatura G."/>
            <person name="Kempken F."/>
            <person name="Maier J."/>
            <person name="Schulte U."/>
        </authorList>
    </citation>
    <scope>NUCLEOTIDE SEQUENCE [LARGE SCALE GENOMIC DNA]</scope>
    <source>
        <strain>ATCC 24698 / 74-OR23-1A / CBS 708.71 / DSM 1257 / FGSC 987</strain>
    </source>
</reference>
<reference key="3">
    <citation type="journal article" date="2003" name="Nature">
        <title>The genome sequence of the filamentous fungus Neurospora crassa.</title>
        <authorList>
            <person name="Galagan J.E."/>
            <person name="Calvo S.E."/>
            <person name="Borkovich K.A."/>
            <person name="Selker E.U."/>
            <person name="Read N.D."/>
            <person name="Jaffe D.B."/>
            <person name="FitzHugh W."/>
            <person name="Ma L.-J."/>
            <person name="Smirnov S."/>
            <person name="Purcell S."/>
            <person name="Rehman B."/>
            <person name="Elkins T."/>
            <person name="Engels R."/>
            <person name="Wang S."/>
            <person name="Nielsen C.B."/>
            <person name="Butler J."/>
            <person name="Endrizzi M."/>
            <person name="Qui D."/>
            <person name="Ianakiev P."/>
            <person name="Bell-Pedersen D."/>
            <person name="Nelson M.A."/>
            <person name="Werner-Washburne M."/>
            <person name="Selitrennikoff C.P."/>
            <person name="Kinsey J.A."/>
            <person name="Braun E.L."/>
            <person name="Zelter A."/>
            <person name="Schulte U."/>
            <person name="Kothe G.O."/>
            <person name="Jedd G."/>
            <person name="Mewes H.-W."/>
            <person name="Staben C."/>
            <person name="Marcotte E."/>
            <person name="Greenberg D."/>
            <person name="Roy A."/>
            <person name="Foley K."/>
            <person name="Naylor J."/>
            <person name="Stange-Thomann N."/>
            <person name="Barrett R."/>
            <person name="Gnerre S."/>
            <person name="Kamal M."/>
            <person name="Kamvysselis M."/>
            <person name="Mauceli E.W."/>
            <person name="Bielke C."/>
            <person name="Rudd S."/>
            <person name="Frishman D."/>
            <person name="Krystofova S."/>
            <person name="Rasmussen C."/>
            <person name="Metzenberg R.L."/>
            <person name="Perkins D.D."/>
            <person name="Kroken S."/>
            <person name="Cogoni C."/>
            <person name="Macino G."/>
            <person name="Catcheside D.E.A."/>
            <person name="Li W."/>
            <person name="Pratt R.J."/>
            <person name="Osmani S.A."/>
            <person name="DeSouza C.P.C."/>
            <person name="Glass N.L."/>
            <person name="Orbach M.J."/>
            <person name="Berglund J.A."/>
            <person name="Voelker R."/>
            <person name="Yarden O."/>
            <person name="Plamann M."/>
            <person name="Seiler S."/>
            <person name="Dunlap J.C."/>
            <person name="Radford A."/>
            <person name="Aramayo R."/>
            <person name="Natvig D.O."/>
            <person name="Alex L.A."/>
            <person name="Mannhaupt G."/>
            <person name="Ebbole D.J."/>
            <person name="Freitag M."/>
            <person name="Paulsen I."/>
            <person name="Sachs M.S."/>
            <person name="Lander E.S."/>
            <person name="Nusbaum C."/>
            <person name="Birren B.W."/>
        </authorList>
    </citation>
    <scope>NUCLEOTIDE SEQUENCE [LARGE SCALE GENOMIC DNA]</scope>
    <source>
        <strain>ATCC 24698 / 74-OR23-1A / CBS 708.71 / DSM 1257 / FGSC 987</strain>
    </source>
</reference>
<organism>
    <name type="scientific">Neurospora crassa (strain ATCC 24698 / 74-OR23-1A / CBS 708.71 / DSM 1257 / FGSC 987)</name>
    <dbReference type="NCBI Taxonomy" id="367110"/>
    <lineage>
        <taxon>Eukaryota</taxon>
        <taxon>Fungi</taxon>
        <taxon>Dikarya</taxon>
        <taxon>Ascomycota</taxon>
        <taxon>Pezizomycotina</taxon>
        <taxon>Sordariomycetes</taxon>
        <taxon>Sordariomycetidae</taxon>
        <taxon>Sordariales</taxon>
        <taxon>Sordariaceae</taxon>
        <taxon>Neurospora</taxon>
    </lineage>
</organism>